<organism>
    <name type="scientific">Delia radicum</name>
    <name type="common">Cabbage root fly</name>
    <name type="synonym">Anthomyia brassicae</name>
    <dbReference type="NCBI Taxonomy" id="30064"/>
    <lineage>
        <taxon>Eukaryota</taxon>
        <taxon>Metazoa</taxon>
        <taxon>Ecdysozoa</taxon>
        <taxon>Arthropoda</taxon>
        <taxon>Hexapoda</taxon>
        <taxon>Insecta</taxon>
        <taxon>Pterygota</taxon>
        <taxon>Neoptera</taxon>
        <taxon>Endopterygota</taxon>
        <taxon>Diptera</taxon>
        <taxon>Brachycera</taxon>
        <taxon>Muscomorpha</taxon>
        <taxon>Muscoidea</taxon>
        <taxon>Anthomyiidae</taxon>
        <taxon>Anthomyiinae</taxon>
        <taxon>Delia</taxon>
    </lineage>
</organism>
<evidence type="ECO:0000250" key="1">
    <source>
        <dbReference type="UniProtKB" id="P42559"/>
    </source>
</evidence>
<evidence type="ECO:0000255" key="2"/>
<evidence type="ECO:0000269" key="3">
    <source>
    </source>
</evidence>
<evidence type="ECO:0000305" key="4"/>
<name>ALLC2_DELRA</name>
<protein>
    <recommendedName>
        <fullName>Allatostatin-C2</fullName>
        <shortName>AST-C2</shortName>
    </recommendedName>
</protein>
<dbReference type="GO" id="GO:0005576">
    <property type="term" value="C:extracellular region"/>
    <property type="evidence" value="ECO:0007669"/>
    <property type="project" value="UniProtKB-SubCell"/>
</dbReference>
<dbReference type="GO" id="GO:0007218">
    <property type="term" value="P:neuropeptide signaling pathway"/>
    <property type="evidence" value="ECO:0007669"/>
    <property type="project" value="UniProtKB-KW"/>
</dbReference>
<comment type="function">
    <text evidence="1">Strongly inhibits juvenile hormone biosynthesis. May act as a neurotransmitter or neuromodulator (By similarity).</text>
</comment>
<comment type="subcellular location">
    <subcellularLocation>
        <location evidence="1">Secreted</location>
    </subcellularLocation>
</comment>
<comment type="tissue specificity">
    <text evidence="3">Expressed in the CNS and midgut but not in the ring gland, thoracic perisymapthetic organs (tPSO) or abdominal perisymapthetic organs (aPSO) (at protein level).</text>
</comment>
<comment type="developmental stage">
    <text evidence="3">Detected in larvae.</text>
</comment>
<comment type="mass spectrometry"/>
<comment type="similarity">
    <text evidence="2">Belongs to the allatostatin family.</text>
</comment>
<feature type="peptide" id="PRO_0000419716" description="Allatostatin-C2">
    <location>
        <begin position="1"/>
        <end position="15"/>
    </location>
</feature>
<feature type="disulfide bond" evidence="3">
    <location>
        <begin position="7"/>
        <end position="14"/>
    </location>
</feature>
<feature type="unsure residue" description="I or L" evidence="3">
    <location>
        <position position="12"/>
    </location>
</feature>
<accession>B3EWJ6</accession>
<keyword id="KW-0903">Direct protein sequencing</keyword>
<keyword id="KW-1015">Disulfide bond</keyword>
<keyword id="KW-0527">Neuropeptide</keyword>
<keyword id="KW-0964">Secreted</keyword>
<sequence>QVRYRQCYFNPISCF</sequence>
<proteinExistence type="evidence at protein level"/>
<reference evidence="4" key="1">
    <citation type="journal article" date="2012" name="PLoS ONE">
        <title>Peptidomics of the agriculturally damaging larval stage of the cabbage root fly Delia radicum (Diptera: Anthomyiidae).</title>
        <authorList>
            <person name="Zoephel J."/>
            <person name="Reiher W."/>
            <person name="Rexer K.-H."/>
            <person name="Kahnt J."/>
            <person name="Wegener C."/>
        </authorList>
    </citation>
    <scope>PROTEIN SEQUENCE</scope>
    <scope>TISSUE SPECIFICITY</scope>
    <scope>DEVELOPMENTAL STAGE</scope>
    <scope>MASS SPECTROMETRY</scope>
    <source>
        <tissue evidence="3">CNS</tissue>
        <tissue evidence="3">Midgut</tissue>
    </source>
</reference>